<dbReference type="EMBL" id="CP000786">
    <property type="protein sequence ID" value="ABZ98071.1"/>
    <property type="molecule type" value="Genomic_DNA"/>
</dbReference>
<dbReference type="RefSeq" id="WP_012388943.1">
    <property type="nucleotide sequence ID" value="NC_010602.1"/>
</dbReference>
<dbReference type="SMR" id="B0SSI1"/>
<dbReference type="STRING" id="456481.LEPBI_I1968"/>
<dbReference type="KEGG" id="lbi:LEPBI_I1968"/>
<dbReference type="HOGENOM" id="CLU_072226_1_1_12"/>
<dbReference type="OrthoDB" id="9807653at2"/>
<dbReference type="BioCyc" id="LBIF456481:LEPBI_RS09725-MONOMER"/>
<dbReference type="Proteomes" id="UP000001847">
    <property type="component" value="Chromosome I"/>
</dbReference>
<dbReference type="GO" id="GO:0015935">
    <property type="term" value="C:small ribosomal subunit"/>
    <property type="evidence" value="ECO:0007669"/>
    <property type="project" value="InterPro"/>
</dbReference>
<dbReference type="GO" id="GO:0019843">
    <property type="term" value="F:rRNA binding"/>
    <property type="evidence" value="ECO:0007669"/>
    <property type="project" value="UniProtKB-UniRule"/>
</dbReference>
<dbReference type="GO" id="GO:0003735">
    <property type="term" value="F:structural constituent of ribosome"/>
    <property type="evidence" value="ECO:0007669"/>
    <property type="project" value="InterPro"/>
</dbReference>
<dbReference type="GO" id="GO:0000049">
    <property type="term" value="F:tRNA binding"/>
    <property type="evidence" value="ECO:0007669"/>
    <property type="project" value="UniProtKB-UniRule"/>
</dbReference>
<dbReference type="GO" id="GO:0006412">
    <property type="term" value="P:translation"/>
    <property type="evidence" value="ECO:0007669"/>
    <property type="project" value="UniProtKB-UniRule"/>
</dbReference>
<dbReference type="CDD" id="cd14869">
    <property type="entry name" value="uS7_Bacteria"/>
    <property type="match status" value="1"/>
</dbReference>
<dbReference type="FunFam" id="1.10.455.10:FF:000001">
    <property type="entry name" value="30S ribosomal protein S7"/>
    <property type="match status" value="1"/>
</dbReference>
<dbReference type="Gene3D" id="1.10.455.10">
    <property type="entry name" value="Ribosomal protein S7 domain"/>
    <property type="match status" value="1"/>
</dbReference>
<dbReference type="HAMAP" id="MF_00480_B">
    <property type="entry name" value="Ribosomal_uS7_B"/>
    <property type="match status" value="1"/>
</dbReference>
<dbReference type="InterPro" id="IPR000235">
    <property type="entry name" value="Ribosomal_uS7"/>
</dbReference>
<dbReference type="InterPro" id="IPR005717">
    <property type="entry name" value="Ribosomal_uS7_bac/org-type"/>
</dbReference>
<dbReference type="InterPro" id="IPR020606">
    <property type="entry name" value="Ribosomal_uS7_CS"/>
</dbReference>
<dbReference type="InterPro" id="IPR023798">
    <property type="entry name" value="Ribosomal_uS7_dom"/>
</dbReference>
<dbReference type="InterPro" id="IPR036823">
    <property type="entry name" value="Ribosomal_uS7_dom_sf"/>
</dbReference>
<dbReference type="NCBIfam" id="TIGR01029">
    <property type="entry name" value="rpsG_bact"/>
    <property type="match status" value="1"/>
</dbReference>
<dbReference type="PANTHER" id="PTHR11205">
    <property type="entry name" value="RIBOSOMAL PROTEIN S7"/>
    <property type="match status" value="1"/>
</dbReference>
<dbReference type="Pfam" id="PF00177">
    <property type="entry name" value="Ribosomal_S7"/>
    <property type="match status" value="1"/>
</dbReference>
<dbReference type="PIRSF" id="PIRSF002122">
    <property type="entry name" value="RPS7p_RPS7a_RPS5e_RPS7o"/>
    <property type="match status" value="1"/>
</dbReference>
<dbReference type="SUPFAM" id="SSF47973">
    <property type="entry name" value="Ribosomal protein S7"/>
    <property type="match status" value="1"/>
</dbReference>
<dbReference type="PROSITE" id="PS00052">
    <property type="entry name" value="RIBOSOMAL_S7"/>
    <property type="match status" value="1"/>
</dbReference>
<organism>
    <name type="scientific">Leptospira biflexa serovar Patoc (strain Patoc 1 / ATCC 23582 / Paris)</name>
    <dbReference type="NCBI Taxonomy" id="456481"/>
    <lineage>
        <taxon>Bacteria</taxon>
        <taxon>Pseudomonadati</taxon>
        <taxon>Spirochaetota</taxon>
        <taxon>Spirochaetia</taxon>
        <taxon>Leptospirales</taxon>
        <taxon>Leptospiraceae</taxon>
        <taxon>Leptospira</taxon>
    </lineage>
</organism>
<reference key="1">
    <citation type="journal article" date="2008" name="PLoS ONE">
        <title>Genome sequence of the saprophyte Leptospira biflexa provides insights into the evolution of Leptospira and the pathogenesis of leptospirosis.</title>
        <authorList>
            <person name="Picardeau M."/>
            <person name="Bulach D.M."/>
            <person name="Bouchier C."/>
            <person name="Zuerner R.L."/>
            <person name="Zidane N."/>
            <person name="Wilson P.J."/>
            <person name="Creno S."/>
            <person name="Kuczek E.S."/>
            <person name="Bommezzadri S."/>
            <person name="Davis J.C."/>
            <person name="McGrath A."/>
            <person name="Johnson M.J."/>
            <person name="Boursaux-Eude C."/>
            <person name="Seemann T."/>
            <person name="Rouy Z."/>
            <person name="Coppel R.L."/>
            <person name="Rood J.I."/>
            <person name="Lajus A."/>
            <person name="Davies J.K."/>
            <person name="Medigue C."/>
            <person name="Adler B."/>
        </authorList>
    </citation>
    <scope>NUCLEOTIDE SEQUENCE [LARGE SCALE GENOMIC DNA]</scope>
    <source>
        <strain>Patoc 1 / ATCC 23582 / Paris</strain>
    </source>
</reference>
<proteinExistence type="inferred from homology"/>
<keyword id="KW-1185">Reference proteome</keyword>
<keyword id="KW-0687">Ribonucleoprotein</keyword>
<keyword id="KW-0689">Ribosomal protein</keyword>
<keyword id="KW-0694">RNA-binding</keyword>
<keyword id="KW-0699">rRNA-binding</keyword>
<keyword id="KW-0820">tRNA-binding</keyword>
<protein>
    <recommendedName>
        <fullName evidence="1">Small ribosomal subunit protein uS7</fullName>
    </recommendedName>
    <alternativeName>
        <fullName evidence="2">30S ribosomal protein S7</fullName>
    </alternativeName>
</protein>
<evidence type="ECO:0000255" key="1">
    <source>
        <dbReference type="HAMAP-Rule" id="MF_00480"/>
    </source>
</evidence>
<evidence type="ECO:0000305" key="2"/>
<name>RS7_LEPBP</name>
<gene>
    <name evidence="1" type="primary">rpsG</name>
    <name type="ordered locus">LEPBI_I1968</name>
</gene>
<accession>B0SSI1</accession>
<sequence length="157" mass="18017">MSRRRGKVEPRHIEGDPKYNDKVISKFINCLMVDGKKSVAESVFYDALEVIAKKTGQDPFAVFQEALENAKPQVEVKSRRVGGVTYQVPIEVRPERRLALGIRWLIKYSRGRNEKSMKNKLAAEFMEAQKGTGSAIKKKEDIRKMADANKAFSHYRW</sequence>
<feature type="chain" id="PRO_1000125963" description="Small ribosomal subunit protein uS7">
    <location>
        <begin position="1"/>
        <end position="157"/>
    </location>
</feature>
<comment type="function">
    <text evidence="1">One of the primary rRNA binding proteins, it binds directly to 16S rRNA where it nucleates assembly of the head domain of the 30S subunit. Is located at the subunit interface close to the decoding center, probably blocks exit of the E-site tRNA.</text>
</comment>
<comment type="subunit">
    <text evidence="1">Part of the 30S ribosomal subunit. Contacts proteins S9 and S11.</text>
</comment>
<comment type="similarity">
    <text evidence="1">Belongs to the universal ribosomal protein uS7 family.</text>
</comment>